<comment type="function">
    <text evidence="1">One of the determinants for resistance to ethidium bromide and quaternary ammonium compounds.</text>
</comment>
<comment type="subcellular location">
    <subcellularLocation>
        <location evidence="3">Cell membrane</location>
        <topology evidence="3">Multi-pass membrane protein</topology>
    </subcellularLocation>
</comment>
<comment type="similarity">
    <text evidence="3">Belongs to the drug/metabolite transporter (DMT) superfamily. Small multidrug resistance (SMR) (TC 2.A.7.1) family.</text>
</comment>
<name>EBR_SALTM</name>
<accession>P0AA23</accession>
<accession>P14502</accession>
<geneLocation type="plasmid">
    <name>IncN R46</name>
</geneLocation>
<organism>
    <name type="scientific">Salmonella typhimurium</name>
    <dbReference type="NCBI Taxonomy" id="90371"/>
    <lineage>
        <taxon>Bacteria</taxon>
        <taxon>Pseudomonadati</taxon>
        <taxon>Pseudomonadota</taxon>
        <taxon>Gammaproteobacteria</taxon>
        <taxon>Enterobacterales</taxon>
        <taxon>Enterobacteriaceae</taxon>
        <taxon>Salmonella</taxon>
    </lineage>
</organism>
<dbReference type="EMBL" id="M95287">
    <property type="protein sequence ID" value="AAB59086.1"/>
    <property type="molecule type" value="Genomic_DNA"/>
</dbReference>
<dbReference type="PIR" id="S07656">
    <property type="entry name" value="S07656"/>
</dbReference>
<dbReference type="RefSeq" id="NP_511227.1">
    <property type="nucleotide sequence ID" value="NC_003292.1"/>
</dbReference>
<dbReference type="RefSeq" id="YP_003264406.1">
    <property type="nucleotide sequence ID" value="NC_013437.1"/>
</dbReference>
<dbReference type="RefSeq" id="YP_006955544.1">
    <property type="nucleotide sequence ID" value="NC_019001.1"/>
</dbReference>
<dbReference type="SMR" id="P0AA23"/>
<dbReference type="CARD" id="ARO:3005010">
    <property type="molecule name" value="qacEdelta1"/>
    <property type="mechanism identifier" value="ARO:0010000"/>
    <property type="mechanism name" value="antibiotic efflux"/>
</dbReference>
<dbReference type="eggNOG" id="COG2076">
    <property type="taxonomic scope" value="Bacteria"/>
</dbReference>
<dbReference type="OMA" id="EGFTQAW"/>
<dbReference type="GO" id="GO:0005886">
    <property type="term" value="C:plasma membrane"/>
    <property type="evidence" value="ECO:0007669"/>
    <property type="project" value="UniProtKB-SubCell"/>
</dbReference>
<dbReference type="GO" id="GO:0022857">
    <property type="term" value="F:transmembrane transporter activity"/>
    <property type="evidence" value="ECO:0007669"/>
    <property type="project" value="InterPro"/>
</dbReference>
<dbReference type="FunFam" id="1.10.3730.20:FF:000001">
    <property type="entry name" value="Quaternary ammonium compound resistance transporter SugE"/>
    <property type="match status" value="1"/>
</dbReference>
<dbReference type="Gene3D" id="1.10.3730.20">
    <property type="match status" value="1"/>
</dbReference>
<dbReference type="InterPro" id="IPR000390">
    <property type="entry name" value="Small_drug/metabolite_transptr"/>
</dbReference>
<dbReference type="InterPro" id="IPR045324">
    <property type="entry name" value="Small_multidrug_res"/>
</dbReference>
<dbReference type="NCBIfam" id="NF000276">
    <property type="entry name" value="SMR_qac_E"/>
    <property type="match status" value="1"/>
</dbReference>
<dbReference type="PANTHER" id="PTHR30561:SF1">
    <property type="entry name" value="MULTIDRUG TRANSPORTER EMRE"/>
    <property type="match status" value="1"/>
</dbReference>
<dbReference type="PANTHER" id="PTHR30561">
    <property type="entry name" value="SMR FAMILY PROTON-DEPENDENT DRUG EFFLUX TRANSPORTER SUGE"/>
    <property type="match status" value="1"/>
</dbReference>
<dbReference type="Pfam" id="PF00893">
    <property type="entry name" value="Multi_Drug_Res"/>
    <property type="match status" value="1"/>
</dbReference>
<dbReference type="SUPFAM" id="SSF103481">
    <property type="entry name" value="Multidrug resistance efflux transporter EmrE"/>
    <property type="match status" value="1"/>
</dbReference>
<protein>
    <recommendedName>
        <fullName>Putative ethidium bromide resistance protein</fullName>
    </recommendedName>
    <alternativeName>
        <fullName>E1 protein</fullName>
    </alternativeName>
</protein>
<reference key="1">
    <citation type="journal article" date="1989" name="Mol. Microbiol.">
        <title>A novel family of potentially mobile DNA elements encoding site-specific gene-integration functions: integrons.</title>
        <authorList>
            <person name="Stokes H.W."/>
            <person name="Hall R.M."/>
        </authorList>
    </citation>
    <scope>NUCLEOTIDE SEQUENCE [GENOMIC DNA]</scope>
</reference>
<keyword id="KW-1003">Cell membrane</keyword>
<keyword id="KW-0472">Membrane</keyword>
<keyword id="KW-0614">Plasmid</keyword>
<keyword id="KW-0812">Transmembrane</keyword>
<keyword id="KW-1133">Transmembrane helix</keyword>
<keyword id="KW-0813">Transport</keyword>
<evidence type="ECO:0000250" key="1"/>
<evidence type="ECO:0000255" key="2"/>
<evidence type="ECO:0000305" key="3"/>
<proteinExistence type="inferred from homology"/>
<feature type="chain" id="PRO_0000108072" description="Putative ethidium bromide resistance protein">
    <location>
        <begin position="1"/>
        <end position="115"/>
    </location>
</feature>
<feature type="transmembrane region" description="Helical" evidence="2">
    <location>
        <begin position="4"/>
        <end position="21"/>
    </location>
</feature>
<feature type="transmembrane region" description="Helical" evidence="2">
    <location>
        <begin position="30"/>
        <end position="47"/>
    </location>
</feature>
<feature type="transmembrane region" description="Helical" evidence="2">
    <location>
        <begin position="58"/>
        <end position="79"/>
    </location>
</feature>
<feature type="transmembrane region" description="Helical" evidence="2">
    <location>
        <begin position="85"/>
        <end position="104"/>
    </location>
</feature>
<gene>
    <name type="primary">ebr</name>
    <name type="synonym">E1</name>
</gene>
<sequence>MKGWLFLVIAIVGEVIATSALKSSEGFTKLAPSAVVIIGYGIAFYFLSLVLKSIPVGVAYAVWSGLGVVIITAIAWLLHGQKLDAWGFVGMGLIIAAFLLARSPSWKSLRRPTPW</sequence>